<sequence length="220" mass="25553">MNILIFGPPGSGKSTQARRITERYGLTYIASGDIIRAEIKARTPLGIEMERYLSRGDLIPDTIVNTLIISKLRRVRENFIMDGYPRTPEQVITLENYLYDHGIKLDVAIDIYITKEESVRRISGRRICSKCGAVYHVEFNPPKVPGKCDICGGELIQRPDDRPEIVEKRYDIYSKNMEPIIKFYQKQGIYVRIDGHGSIDEVWERIRPLLDYIYNQENRR</sequence>
<proteinExistence type="inferred from homology"/>
<name>KAD_PYRAB</name>
<accession>Q9UZN1</accession>
<accession>G8ZJS0</accession>
<reference key="1">
    <citation type="journal article" date="2003" name="Mol. Microbiol.">
        <title>An integrated analysis of the genome of the hyperthermophilic archaeon Pyrococcus abyssi.</title>
        <authorList>
            <person name="Cohen G.N."/>
            <person name="Barbe V."/>
            <person name="Flament D."/>
            <person name="Galperin M."/>
            <person name="Heilig R."/>
            <person name="Lecompte O."/>
            <person name="Poch O."/>
            <person name="Prieur D."/>
            <person name="Querellou J."/>
            <person name="Ripp R."/>
            <person name="Thierry J.-C."/>
            <person name="Van der Oost J."/>
            <person name="Weissenbach J."/>
            <person name="Zivanovic Y."/>
            <person name="Forterre P."/>
        </authorList>
    </citation>
    <scope>NUCLEOTIDE SEQUENCE [LARGE SCALE GENOMIC DNA]</scope>
    <source>
        <strain>GE5 / Orsay</strain>
    </source>
</reference>
<reference key="2">
    <citation type="journal article" date="2012" name="Curr. Microbiol.">
        <title>Re-annotation of two hyperthermophilic archaea Pyrococcus abyssi GE5 and Pyrococcus furiosus DSM 3638.</title>
        <authorList>
            <person name="Gao J."/>
            <person name="Wang J."/>
        </authorList>
    </citation>
    <scope>GENOME REANNOTATION</scope>
    <source>
        <strain>GE5 / Orsay</strain>
    </source>
</reference>
<gene>
    <name evidence="1" type="primary">adk</name>
    <name type="synonym">adkE</name>
    <name type="ordered locus">PYRAB11150</name>
    <name type="ORF">PAB0739</name>
</gene>
<protein>
    <recommendedName>
        <fullName evidence="1">Adenylate kinase</fullName>
        <shortName evidence="1">AK</shortName>
        <ecNumber evidence="1">2.7.4.3</ecNumber>
    </recommendedName>
    <alternativeName>
        <fullName evidence="1">ATP-AMP transphosphorylase</fullName>
    </alternativeName>
    <alternativeName>
        <fullName evidence="1">ATP:AMP phosphotransferase</fullName>
    </alternativeName>
    <alternativeName>
        <fullName evidence="1">Adenylate monophosphate kinase</fullName>
    </alternativeName>
</protein>
<comment type="function">
    <text evidence="1">Catalyzes the reversible transfer of the terminal phosphate group between ATP and AMP. Plays an important role in cellular energy homeostasis and in adenine nucleotide metabolism.</text>
</comment>
<comment type="catalytic activity">
    <reaction evidence="1">
        <text>AMP + ATP = 2 ADP</text>
        <dbReference type="Rhea" id="RHEA:12973"/>
        <dbReference type="ChEBI" id="CHEBI:30616"/>
        <dbReference type="ChEBI" id="CHEBI:456215"/>
        <dbReference type="ChEBI" id="CHEBI:456216"/>
        <dbReference type="EC" id="2.7.4.3"/>
    </reaction>
</comment>
<comment type="pathway">
    <text evidence="1">Purine metabolism; AMP biosynthesis via salvage pathway; AMP from ADP: step 1/1.</text>
</comment>
<comment type="subunit">
    <text evidence="1">Monomer.</text>
</comment>
<comment type="subcellular location">
    <subcellularLocation>
        <location evidence="1">Cytoplasm</location>
    </subcellularLocation>
</comment>
<comment type="domain">
    <text evidence="1">Consists of three domains, a large central CORE domain and two small peripheral domains, NMPbind and LID, which undergo movements during catalysis. The LID domain closes over the site of phosphoryl transfer upon ATP binding. Assembling and dissambling the active center during each catalytic cycle provides an effective means to prevent ATP hydrolysis. Some bacteria have evolved a zinc-coordinating structure that stabilizes the LID domain.</text>
</comment>
<comment type="similarity">
    <text evidence="1">Belongs to the adenylate kinase family.</text>
</comment>
<organism>
    <name type="scientific">Pyrococcus abyssi (strain GE5 / Orsay)</name>
    <dbReference type="NCBI Taxonomy" id="272844"/>
    <lineage>
        <taxon>Archaea</taxon>
        <taxon>Methanobacteriati</taxon>
        <taxon>Methanobacteriota</taxon>
        <taxon>Thermococci</taxon>
        <taxon>Thermococcales</taxon>
        <taxon>Thermococcaceae</taxon>
        <taxon>Pyrococcus</taxon>
    </lineage>
</organism>
<keyword id="KW-0067">ATP-binding</keyword>
<keyword id="KW-0963">Cytoplasm</keyword>
<keyword id="KW-0418">Kinase</keyword>
<keyword id="KW-0479">Metal-binding</keyword>
<keyword id="KW-0545">Nucleotide biosynthesis</keyword>
<keyword id="KW-0547">Nucleotide-binding</keyword>
<keyword id="KW-0808">Transferase</keyword>
<keyword id="KW-0862">Zinc</keyword>
<feature type="chain" id="PRO_0000158901" description="Adenylate kinase">
    <location>
        <begin position="1"/>
        <end position="220"/>
    </location>
</feature>
<feature type="region of interest" description="NMP" evidence="1">
    <location>
        <begin position="30"/>
        <end position="59"/>
    </location>
</feature>
<feature type="region of interest" description="LID" evidence="1">
    <location>
        <begin position="124"/>
        <end position="161"/>
    </location>
</feature>
<feature type="binding site" evidence="1">
    <location>
        <begin position="10"/>
        <end position="15"/>
    </location>
    <ligand>
        <name>ATP</name>
        <dbReference type="ChEBI" id="CHEBI:30616"/>
    </ligand>
</feature>
<feature type="binding site" evidence="1">
    <location>
        <position position="36"/>
    </location>
    <ligand>
        <name>AMP</name>
        <dbReference type="ChEBI" id="CHEBI:456215"/>
    </ligand>
</feature>
<feature type="binding site" evidence="1">
    <location>
        <begin position="57"/>
        <end position="59"/>
    </location>
    <ligand>
        <name>AMP</name>
        <dbReference type="ChEBI" id="CHEBI:456215"/>
    </ligand>
</feature>
<feature type="binding site" evidence="1">
    <location>
        <begin position="83"/>
        <end position="86"/>
    </location>
    <ligand>
        <name>AMP</name>
        <dbReference type="ChEBI" id="CHEBI:456215"/>
    </ligand>
</feature>
<feature type="binding site" evidence="1">
    <location>
        <position position="90"/>
    </location>
    <ligand>
        <name>AMP</name>
        <dbReference type="ChEBI" id="CHEBI:456215"/>
    </ligand>
</feature>
<feature type="binding site" evidence="1">
    <location>
        <position position="125"/>
    </location>
    <ligand>
        <name>ATP</name>
        <dbReference type="ChEBI" id="CHEBI:30616"/>
    </ligand>
</feature>
<feature type="binding site" evidence="1">
    <location>
        <position position="128"/>
    </location>
    <ligand>
        <name>Zn(2+)</name>
        <dbReference type="ChEBI" id="CHEBI:29105"/>
        <note>structural</note>
    </ligand>
</feature>
<feature type="binding site" evidence="1">
    <location>
        <position position="131"/>
    </location>
    <ligand>
        <name>Zn(2+)</name>
        <dbReference type="ChEBI" id="CHEBI:29105"/>
        <note>structural</note>
    </ligand>
</feature>
<feature type="binding site" evidence="1">
    <location>
        <begin position="134"/>
        <end position="135"/>
    </location>
    <ligand>
        <name>ATP</name>
        <dbReference type="ChEBI" id="CHEBI:30616"/>
    </ligand>
</feature>
<feature type="binding site" evidence="1">
    <location>
        <position position="148"/>
    </location>
    <ligand>
        <name>Zn(2+)</name>
        <dbReference type="ChEBI" id="CHEBI:29105"/>
        <note>structural</note>
    </ligand>
</feature>
<feature type="binding site" evidence="1">
    <location>
        <position position="151"/>
    </location>
    <ligand>
        <name>Zn(2+)</name>
        <dbReference type="ChEBI" id="CHEBI:29105"/>
        <note>structural</note>
    </ligand>
</feature>
<feature type="binding site" evidence="1">
    <location>
        <position position="158"/>
    </location>
    <ligand>
        <name>AMP</name>
        <dbReference type="ChEBI" id="CHEBI:456215"/>
    </ligand>
</feature>
<feature type="binding site" evidence="1">
    <location>
        <position position="169"/>
    </location>
    <ligand>
        <name>AMP</name>
        <dbReference type="ChEBI" id="CHEBI:456215"/>
    </ligand>
</feature>
<feature type="binding site" evidence="1">
    <location>
        <position position="197"/>
    </location>
    <ligand>
        <name>ATP</name>
        <dbReference type="ChEBI" id="CHEBI:30616"/>
    </ligand>
</feature>
<dbReference type="EC" id="2.7.4.3" evidence="1"/>
<dbReference type="EMBL" id="AJ248286">
    <property type="protein sequence ID" value="CAB50026.1"/>
    <property type="molecule type" value="Genomic_DNA"/>
</dbReference>
<dbReference type="EMBL" id="HE613800">
    <property type="protein sequence ID" value="CCE70529.1"/>
    <property type="molecule type" value="Genomic_DNA"/>
</dbReference>
<dbReference type="PIR" id="E75090">
    <property type="entry name" value="E75090"/>
</dbReference>
<dbReference type="RefSeq" id="WP_010868233.1">
    <property type="nucleotide sequence ID" value="NC_000868.1"/>
</dbReference>
<dbReference type="SMR" id="Q9UZN1"/>
<dbReference type="STRING" id="272844.PAB0739"/>
<dbReference type="KEGG" id="pab:PAB0739"/>
<dbReference type="PATRIC" id="fig|272844.11.peg.1172"/>
<dbReference type="eggNOG" id="arCOG01046">
    <property type="taxonomic scope" value="Archaea"/>
</dbReference>
<dbReference type="HOGENOM" id="CLU_032354_1_2_2"/>
<dbReference type="OrthoDB" id="31230at2157"/>
<dbReference type="PhylomeDB" id="Q9UZN1"/>
<dbReference type="UniPathway" id="UPA00588">
    <property type="reaction ID" value="UER00649"/>
</dbReference>
<dbReference type="Proteomes" id="UP000000810">
    <property type="component" value="Chromosome"/>
</dbReference>
<dbReference type="Proteomes" id="UP000009139">
    <property type="component" value="Chromosome"/>
</dbReference>
<dbReference type="GO" id="GO:0005737">
    <property type="term" value="C:cytoplasm"/>
    <property type="evidence" value="ECO:0007669"/>
    <property type="project" value="UniProtKB-SubCell"/>
</dbReference>
<dbReference type="GO" id="GO:0004017">
    <property type="term" value="F:adenylate kinase activity"/>
    <property type="evidence" value="ECO:0007669"/>
    <property type="project" value="UniProtKB-UniRule"/>
</dbReference>
<dbReference type="GO" id="GO:0005524">
    <property type="term" value="F:ATP binding"/>
    <property type="evidence" value="ECO:0007669"/>
    <property type="project" value="UniProtKB-UniRule"/>
</dbReference>
<dbReference type="GO" id="GO:0008270">
    <property type="term" value="F:zinc ion binding"/>
    <property type="evidence" value="ECO:0007669"/>
    <property type="project" value="UniProtKB-UniRule"/>
</dbReference>
<dbReference type="GO" id="GO:0044209">
    <property type="term" value="P:AMP salvage"/>
    <property type="evidence" value="ECO:0007669"/>
    <property type="project" value="UniProtKB-UniRule"/>
</dbReference>
<dbReference type="CDD" id="cd01428">
    <property type="entry name" value="ADK"/>
    <property type="match status" value="1"/>
</dbReference>
<dbReference type="FunFam" id="3.40.50.300:FF:000106">
    <property type="entry name" value="Adenylate kinase mitochondrial"/>
    <property type="match status" value="1"/>
</dbReference>
<dbReference type="Gene3D" id="3.40.50.300">
    <property type="entry name" value="P-loop containing nucleotide triphosphate hydrolases"/>
    <property type="match status" value="1"/>
</dbReference>
<dbReference type="HAMAP" id="MF_00235">
    <property type="entry name" value="Adenylate_kinase_Adk"/>
    <property type="match status" value="1"/>
</dbReference>
<dbReference type="InterPro" id="IPR006259">
    <property type="entry name" value="Adenyl_kin_sub"/>
</dbReference>
<dbReference type="InterPro" id="IPR000850">
    <property type="entry name" value="Adenylat/UMP-CMP_kin"/>
</dbReference>
<dbReference type="InterPro" id="IPR033690">
    <property type="entry name" value="Adenylat_kinase_CS"/>
</dbReference>
<dbReference type="InterPro" id="IPR007862">
    <property type="entry name" value="Adenylate_kinase_lid-dom"/>
</dbReference>
<dbReference type="InterPro" id="IPR027417">
    <property type="entry name" value="P-loop_NTPase"/>
</dbReference>
<dbReference type="NCBIfam" id="TIGR01351">
    <property type="entry name" value="adk"/>
    <property type="match status" value="1"/>
</dbReference>
<dbReference type="NCBIfam" id="NF001387">
    <property type="entry name" value="PRK00279.2-5"/>
    <property type="match status" value="1"/>
</dbReference>
<dbReference type="PANTHER" id="PTHR23359">
    <property type="entry name" value="NUCLEOTIDE KINASE"/>
    <property type="match status" value="1"/>
</dbReference>
<dbReference type="Pfam" id="PF00406">
    <property type="entry name" value="ADK"/>
    <property type="match status" value="1"/>
</dbReference>
<dbReference type="Pfam" id="PF05191">
    <property type="entry name" value="ADK_lid"/>
    <property type="match status" value="1"/>
</dbReference>
<dbReference type="PRINTS" id="PR00094">
    <property type="entry name" value="ADENYLTKNASE"/>
</dbReference>
<dbReference type="SUPFAM" id="SSF52540">
    <property type="entry name" value="P-loop containing nucleoside triphosphate hydrolases"/>
    <property type="match status" value="1"/>
</dbReference>
<dbReference type="PROSITE" id="PS00113">
    <property type="entry name" value="ADENYLATE_KINASE"/>
    <property type="match status" value="1"/>
</dbReference>
<evidence type="ECO:0000255" key="1">
    <source>
        <dbReference type="HAMAP-Rule" id="MF_00235"/>
    </source>
</evidence>